<sequence>MIQYSSKFNNAKVLVLGDVMLDRYWFGATNRISPEAPVPVVKVQGIEERAGGAANVAMNIASLSVPVALHGLIGQDDAGRALDKLLNSHNIQNHCVALDSHPTITKLRILSRHQQLLRLDFEEGFHHVASDSLLAKLEQEITAYGALILSDYGKGTLESVQQMIQVARKAGVPTLIDPKGTDFERYRGATLLTPNMSEFEAVVGHCKDDDEIVEKGLKLIADFELTALLVTRSEKGMTLLRPNQAPFHLPTQAKEVYDVTGAGDTVISVLATAIADGRPYEEACYLANAAAGVVVGKLGTSTVTPTELENAIHHREETGFGILAEDELKRAVEQAKQRGEKIVMTNGCFDILHPGHVSYLENARKLGDRLIVAVNTDESVKRLKGESRPINDLNARMAVLAGLASVDWVVPFAEDTPQRLIGEILPNLLVKGGDYKPEEIAGSQEVWANGGEVKVLNFENGCSTTNVIKKIQASK</sequence>
<dbReference type="EC" id="2.7.1.167"/>
<dbReference type="EC" id="2.7.7.70"/>
<dbReference type="EMBL" id="AY127572">
    <property type="protein sequence ID" value="AAN02283.1"/>
    <property type="molecule type" value="Genomic_DNA"/>
</dbReference>
<dbReference type="RefSeq" id="WP_005596429.1">
    <property type="nucleotide sequence ID" value="NZ_JBHLVK010000012.1"/>
</dbReference>
<dbReference type="SMR" id="Q8GLU7"/>
<dbReference type="GeneID" id="48598568"/>
<dbReference type="UniPathway" id="UPA00356">
    <property type="reaction ID" value="UER00437"/>
</dbReference>
<dbReference type="UniPathway" id="UPA00356">
    <property type="reaction ID" value="UER00439"/>
</dbReference>
<dbReference type="UniPathway" id="UPA00958"/>
<dbReference type="GO" id="GO:0005829">
    <property type="term" value="C:cytosol"/>
    <property type="evidence" value="ECO:0007669"/>
    <property type="project" value="TreeGrafter"/>
</dbReference>
<dbReference type="GO" id="GO:0005524">
    <property type="term" value="F:ATP binding"/>
    <property type="evidence" value="ECO:0007669"/>
    <property type="project" value="UniProtKB-UniRule"/>
</dbReference>
<dbReference type="GO" id="GO:0033785">
    <property type="term" value="F:heptose 7-phosphate kinase activity"/>
    <property type="evidence" value="ECO:0007669"/>
    <property type="project" value="UniProtKB-UniRule"/>
</dbReference>
<dbReference type="GO" id="GO:0033786">
    <property type="term" value="F:heptose-1-phosphate adenylyltransferase activity"/>
    <property type="evidence" value="ECO:0007669"/>
    <property type="project" value="UniProtKB-UniRule"/>
</dbReference>
<dbReference type="GO" id="GO:0016773">
    <property type="term" value="F:phosphotransferase activity, alcohol group as acceptor"/>
    <property type="evidence" value="ECO:0007669"/>
    <property type="project" value="InterPro"/>
</dbReference>
<dbReference type="GO" id="GO:0097171">
    <property type="term" value="P:ADP-L-glycero-beta-D-manno-heptose biosynthetic process"/>
    <property type="evidence" value="ECO:0007669"/>
    <property type="project" value="UniProtKB-UniPathway"/>
</dbReference>
<dbReference type="GO" id="GO:0009244">
    <property type="term" value="P:lipopolysaccharide core region biosynthetic process"/>
    <property type="evidence" value="ECO:0007669"/>
    <property type="project" value="UniProtKB-UniPathway"/>
</dbReference>
<dbReference type="CDD" id="cd01172">
    <property type="entry name" value="RfaE_like"/>
    <property type="match status" value="1"/>
</dbReference>
<dbReference type="FunFam" id="3.40.1190.20:FF:000002">
    <property type="entry name" value="Bifunctional protein HldE"/>
    <property type="match status" value="1"/>
</dbReference>
<dbReference type="FunFam" id="3.40.50.620:FF:000028">
    <property type="entry name" value="Bifunctional protein HldE"/>
    <property type="match status" value="1"/>
</dbReference>
<dbReference type="Gene3D" id="3.40.1190.20">
    <property type="match status" value="1"/>
</dbReference>
<dbReference type="Gene3D" id="3.40.50.620">
    <property type="entry name" value="HUPs"/>
    <property type="match status" value="1"/>
</dbReference>
<dbReference type="HAMAP" id="MF_01603">
    <property type="entry name" value="HldE"/>
    <property type="match status" value="1"/>
</dbReference>
<dbReference type="InterPro" id="IPR023030">
    <property type="entry name" value="Bifunc_HldE"/>
</dbReference>
<dbReference type="InterPro" id="IPR002173">
    <property type="entry name" value="Carboh/pur_kinase_PfkB_CS"/>
</dbReference>
<dbReference type="InterPro" id="IPR004821">
    <property type="entry name" value="Cyt_trans-like"/>
</dbReference>
<dbReference type="InterPro" id="IPR011611">
    <property type="entry name" value="PfkB_dom"/>
</dbReference>
<dbReference type="InterPro" id="IPR011913">
    <property type="entry name" value="RfaE_dom_I"/>
</dbReference>
<dbReference type="InterPro" id="IPR011914">
    <property type="entry name" value="RfaE_dom_II"/>
</dbReference>
<dbReference type="InterPro" id="IPR029056">
    <property type="entry name" value="Ribokinase-like"/>
</dbReference>
<dbReference type="InterPro" id="IPR014729">
    <property type="entry name" value="Rossmann-like_a/b/a_fold"/>
</dbReference>
<dbReference type="NCBIfam" id="TIGR00125">
    <property type="entry name" value="cyt_tran_rel"/>
    <property type="match status" value="1"/>
</dbReference>
<dbReference type="NCBIfam" id="NF008454">
    <property type="entry name" value="PRK11316.1"/>
    <property type="match status" value="1"/>
</dbReference>
<dbReference type="NCBIfam" id="TIGR02198">
    <property type="entry name" value="rfaE_dom_I"/>
    <property type="match status" value="1"/>
</dbReference>
<dbReference type="NCBIfam" id="TIGR02199">
    <property type="entry name" value="rfaE_dom_II"/>
    <property type="match status" value="1"/>
</dbReference>
<dbReference type="PANTHER" id="PTHR46969">
    <property type="entry name" value="BIFUNCTIONAL PROTEIN HLDE"/>
    <property type="match status" value="1"/>
</dbReference>
<dbReference type="PANTHER" id="PTHR46969:SF1">
    <property type="entry name" value="BIFUNCTIONAL PROTEIN HLDE"/>
    <property type="match status" value="1"/>
</dbReference>
<dbReference type="Pfam" id="PF01467">
    <property type="entry name" value="CTP_transf_like"/>
    <property type="match status" value="1"/>
</dbReference>
<dbReference type="Pfam" id="PF00294">
    <property type="entry name" value="PfkB"/>
    <property type="match status" value="1"/>
</dbReference>
<dbReference type="SUPFAM" id="SSF52374">
    <property type="entry name" value="Nucleotidylyl transferase"/>
    <property type="match status" value="1"/>
</dbReference>
<dbReference type="SUPFAM" id="SSF53613">
    <property type="entry name" value="Ribokinase-like"/>
    <property type="match status" value="1"/>
</dbReference>
<dbReference type="PROSITE" id="PS00583">
    <property type="entry name" value="PFKB_KINASES_1"/>
    <property type="match status" value="1"/>
</dbReference>
<name>HLDE_ACTPL</name>
<evidence type="ECO:0000250" key="1"/>
<evidence type="ECO:0000255" key="2"/>
<evidence type="ECO:0000305" key="3"/>
<evidence type="ECO:0000305" key="4">
    <source>
    </source>
</evidence>
<comment type="function">
    <text evidence="4">Catalyzes the phosphorylation of D-glycero-D-manno-heptose 7-phosphate at the C-1 position to selectively form D-glycero-beta-D-manno-heptose-1,7-bisphosphate.</text>
</comment>
<comment type="function">
    <text evidence="4">Catalyzes the ADP transfer from ATP to D-glycero-beta-D-manno-heptose 1-phosphate, yielding ADP-D-glycero-beta-D-manno-heptose.</text>
</comment>
<comment type="catalytic activity">
    <reaction>
        <text>D-glycero-beta-D-manno-heptose 7-phosphate + ATP = D-glycero-beta-D-manno-heptose 1,7-bisphosphate + ADP + H(+)</text>
        <dbReference type="Rhea" id="RHEA:27473"/>
        <dbReference type="ChEBI" id="CHEBI:15378"/>
        <dbReference type="ChEBI" id="CHEBI:30616"/>
        <dbReference type="ChEBI" id="CHEBI:60204"/>
        <dbReference type="ChEBI" id="CHEBI:60208"/>
        <dbReference type="ChEBI" id="CHEBI:456216"/>
        <dbReference type="EC" id="2.7.1.167"/>
    </reaction>
</comment>
<comment type="catalytic activity">
    <reaction>
        <text>D-glycero-beta-D-manno-heptose 1-phosphate + ATP + H(+) = ADP-D-glycero-beta-D-manno-heptose + diphosphate</text>
        <dbReference type="Rhea" id="RHEA:27465"/>
        <dbReference type="ChEBI" id="CHEBI:15378"/>
        <dbReference type="ChEBI" id="CHEBI:30616"/>
        <dbReference type="ChEBI" id="CHEBI:33019"/>
        <dbReference type="ChEBI" id="CHEBI:59967"/>
        <dbReference type="ChEBI" id="CHEBI:61593"/>
        <dbReference type="EC" id="2.7.7.70"/>
    </reaction>
</comment>
<comment type="pathway">
    <text>Nucleotide-sugar biosynthesis; ADP-L-glycero-beta-D-manno-heptose biosynthesis; ADP-L-glycero-beta-D-manno-heptose from D-glycero-beta-D-manno-heptose 7-phosphate: step 1/4.</text>
</comment>
<comment type="pathway">
    <text>Nucleotide-sugar biosynthesis; ADP-L-glycero-beta-D-manno-heptose biosynthesis; ADP-L-glycero-beta-D-manno-heptose from D-glycero-beta-D-manno-heptose 7-phosphate: step 3/4.</text>
</comment>
<comment type="pathway">
    <text>Bacterial outer membrane biogenesis; LPS core biosynthesis.</text>
</comment>
<comment type="subunit">
    <text evidence="1">Homodimer.</text>
</comment>
<comment type="similarity">
    <text evidence="3">In the N-terminal section; belongs to the carbohydrate kinase PfkB family.</text>
</comment>
<comment type="similarity">
    <text evidence="3">In the C-terminal section; belongs to the cytidylyltransferase family.</text>
</comment>
<protein>
    <recommendedName>
        <fullName>Bifunctional protein HldE</fullName>
    </recommendedName>
    <domain>
        <recommendedName>
            <fullName>D-beta-D-heptose 7-phosphate kinase</fullName>
            <ecNumber>2.7.1.167</ecNumber>
        </recommendedName>
        <alternativeName>
            <fullName>D-beta-D-heptose 7-phosphotransferase</fullName>
        </alternativeName>
        <alternativeName>
            <fullName>D-glycero-beta-D-manno-heptose-7-phosphate kinase</fullName>
        </alternativeName>
    </domain>
    <domain>
        <recommendedName>
            <fullName>D-beta-D-heptose 1-phosphate adenylyltransferase</fullName>
            <ecNumber>2.7.7.70</ecNumber>
        </recommendedName>
        <alternativeName>
            <fullName>D-glycero-beta-D-manno-heptose 1-phosphate adenylyltransferase</fullName>
        </alternativeName>
    </domain>
</protein>
<accession>Q8GLU7</accession>
<proteinExistence type="inferred from homology"/>
<gene>
    <name type="primary">hldE</name>
    <name type="synonym">rfaE</name>
</gene>
<feature type="chain" id="PRO_0000080101" description="Bifunctional protein HldE">
    <location>
        <begin position="1"/>
        <end position="475"/>
    </location>
</feature>
<feature type="region of interest" description="Ribokinase">
    <location>
        <begin position="1"/>
        <end position="318"/>
    </location>
</feature>
<feature type="region of interest" description="Cytidylyltransferase">
    <location>
        <begin position="344"/>
        <end position="475"/>
    </location>
</feature>
<feature type="active site" evidence="2">
    <location>
        <position position="264"/>
    </location>
</feature>
<feature type="binding site" evidence="2">
    <location>
        <begin position="195"/>
        <end position="198"/>
    </location>
    <ligand>
        <name>ATP</name>
        <dbReference type="ChEBI" id="CHEBI:30616"/>
    </ligand>
</feature>
<keyword id="KW-0067">ATP-binding</keyword>
<keyword id="KW-0119">Carbohydrate metabolism</keyword>
<keyword id="KW-0418">Kinase</keyword>
<keyword id="KW-0448">Lipopolysaccharide biosynthesis</keyword>
<keyword id="KW-0511">Multifunctional enzyme</keyword>
<keyword id="KW-0547">Nucleotide-binding</keyword>
<keyword id="KW-0548">Nucleotidyltransferase</keyword>
<keyword id="KW-0808">Transferase</keyword>
<reference key="1">
    <citation type="journal article" date="2003" name="FEMS Microbiol. Lett.">
        <title>Identification, cloning and characterization of rfaE of Actinobacillus pleuropneumoniae serotype 1, a gene involved in lipopolysaccharide inner-core biosynthesis.</title>
        <authorList>
            <person name="Provost M."/>
            <person name="Harel J."/>
            <person name="Labrie J."/>
            <person name="Sirois M."/>
            <person name="Jacques M."/>
        </authorList>
    </citation>
    <scope>NUCLEOTIDE SEQUENCE [GENOMIC DNA]</scope>
    <scope>ROLE IN LPS BIOSYNTHESIS</scope>
    <source>
        <strain>ATCC 27088 / DSM 13472 / CCM 5869 / S4074 / Serotype 1</strain>
    </source>
</reference>
<organism>
    <name type="scientific">Actinobacillus pleuropneumoniae</name>
    <name type="common">Haemophilus pleuropneumoniae</name>
    <dbReference type="NCBI Taxonomy" id="715"/>
    <lineage>
        <taxon>Bacteria</taxon>
        <taxon>Pseudomonadati</taxon>
        <taxon>Pseudomonadota</taxon>
        <taxon>Gammaproteobacteria</taxon>
        <taxon>Pasteurellales</taxon>
        <taxon>Pasteurellaceae</taxon>
        <taxon>Actinobacillus</taxon>
    </lineage>
</organism>